<evidence type="ECO:0000255" key="1">
    <source>
        <dbReference type="HAMAP-Rule" id="MF_00036"/>
    </source>
</evidence>
<evidence type="ECO:0000305" key="2"/>
<name>SYA_COREF</name>
<sequence length="890" mass="97033">MQTHEIRERFTNHFVNAGHTAVPSASLILDDPNLLFVNAGMVPFKPYFLGQQTPPFANGTATSIQKCVRTLDIEEVGITTRHNTFFQMAGNFSFGQYFKEGAITHAWTLLTNPVEEGGYGLDPERLWVTVYLDDDEAAEIWEKKIGVPAERIQRLGMADNYWSMGVPGPCGPCSEIYYDRGPKYGNEGGPAVDDSRYLEIWNLVFMEFERGEGTGKDSFEIIGELPKKNIDTGMGVERVACILQGVENVYETDLLRPVIDVAETLTGATYGRDNTADIRFRVIADHSRTGMMLILDGVTPGNEGRGYILRRLLRRIIRSARLLGATGETMEKFMNTIMDTMTPSYPEIAENRERILRVAITEERAFLKTLVSGTHLFEEAAASIKSSGSTTVAGAQAFALHDTYGFPIDLTLEMAAEAGLEVDVEGFESLMAEQRSRAKADSQAKKHGHADLSIYREWVDNHPTVFTGFEELESQSRVLGLLSDGTRINEAAEGQEVEVILDQSPLYAESGGQLGDRGRILMGDTVVDIQDVQKIGKKLWVHKAVVANGGLAVGDEVVAAVDKQWRHAARQAHTATHLIHAALRQVLGPTAVQAGSMNKPGYLRFDFNYTDQLTPEQLNQIQAITNEAVDTDWAVNTIETSLEEARAMGAMALFGENYGDLVRVVEIGGPFSMELCGGTHVEHSSQIGPVALLGESSIGSGVRRIEAYSGLNSFNYLSKERALAESLSSILKTPSTDLPERISQLLDKLKAAEKEIATLHRRELAAKSEEFITGAEEINGIRAVMVRVQDGLDAGDLRTLATTLRDKLSNGEGLVVVASRSEDGTKVPFVAGATKQAVARGVHSGNLIKLIGSYIDGRGGGKPDMAQGSGSDIDGLDAAFNAVRAELENL</sequence>
<proteinExistence type="inferred from homology"/>
<gene>
    <name evidence="1" type="primary">alaS</name>
    <name type="ordered locus">CE1748</name>
</gene>
<dbReference type="EC" id="6.1.1.7" evidence="1"/>
<dbReference type="EMBL" id="BA000035">
    <property type="protein sequence ID" value="BAC18558.1"/>
    <property type="status" value="ALT_INIT"/>
    <property type="molecule type" value="Genomic_DNA"/>
</dbReference>
<dbReference type="RefSeq" id="WP_035108828.1">
    <property type="nucleotide sequence ID" value="NC_004369.1"/>
</dbReference>
<dbReference type="SMR" id="Q8FT23"/>
<dbReference type="STRING" id="196164.gene:10742169"/>
<dbReference type="KEGG" id="cef:CE1748"/>
<dbReference type="eggNOG" id="COG0013">
    <property type="taxonomic scope" value="Bacteria"/>
</dbReference>
<dbReference type="HOGENOM" id="CLU_004485_1_1_11"/>
<dbReference type="OrthoDB" id="9803884at2"/>
<dbReference type="Proteomes" id="UP000001409">
    <property type="component" value="Chromosome"/>
</dbReference>
<dbReference type="GO" id="GO:0005829">
    <property type="term" value="C:cytosol"/>
    <property type="evidence" value="ECO:0007669"/>
    <property type="project" value="TreeGrafter"/>
</dbReference>
<dbReference type="GO" id="GO:0004813">
    <property type="term" value="F:alanine-tRNA ligase activity"/>
    <property type="evidence" value="ECO:0007669"/>
    <property type="project" value="UniProtKB-UniRule"/>
</dbReference>
<dbReference type="GO" id="GO:0002161">
    <property type="term" value="F:aminoacyl-tRNA deacylase activity"/>
    <property type="evidence" value="ECO:0007669"/>
    <property type="project" value="TreeGrafter"/>
</dbReference>
<dbReference type="GO" id="GO:0005524">
    <property type="term" value="F:ATP binding"/>
    <property type="evidence" value="ECO:0007669"/>
    <property type="project" value="UniProtKB-UniRule"/>
</dbReference>
<dbReference type="GO" id="GO:0000049">
    <property type="term" value="F:tRNA binding"/>
    <property type="evidence" value="ECO:0007669"/>
    <property type="project" value="UniProtKB-KW"/>
</dbReference>
<dbReference type="GO" id="GO:0008270">
    <property type="term" value="F:zinc ion binding"/>
    <property type="evidence" value="ECO:0007669"/>
    <property type="project" value="UniProtKB-UniRule"/>
</dbReference>
<dbReference type="GO" id="GO:0006419">
    <property type="term" value="P:alanyl-tRNA aminoacylation"/>
    <property type="evidence" value="ECO:0007669"/>
    <property type="project" value="UniProtKB-UniRule"/>
</dbReference>
<dbReference type="CDD" id="cd00673">
    <property type="entry name" value="AlaRS_core"/>
    <property type="match status" value="1"/>
</dbReference>
<dbReference type="FunFam" id="2.40.30.130:FF:000001">
    <property type="entry name" value="Alanine--tRNA ligase"/>
    <property type="match status" value="1"/>
</dbReference>
<dbReference type="FunFam" id="3.10.310.40:FF:000001">
    <property type="entry name" value="Alanine--tRNA ligase"/>
    <property type="match status" value="1"/>
</dbReference>
<dbReference type="FunFam" id="3.30.54.20:FF:000001">
    <property type="entry name" value="Alanine--tRNA ligase"/>
    <property type="match status" value="1"/>
</dbReference>
<dbReference type="FunFam" id="3.30.930.10:FF:000004">
    <property type="entry name" value="Alanine--tRNA ligase"/>
    <property type="match status" value="1"/>
</dbReference>
<dbReference type="FunFam" id="3.30.980.10:FF:000004">
    <property type="entry name" value="Alanine--tRNA ligase, cytoplasmic"/>
    <property type="match status" value="1"/>
</dbReference>
<dbReference type="Gene3D" id="2.40.30.130">
    <property type="match status" value="1"/>
</dbReference>
<dbReference type="Gene3D" id="3.10.310.40">
    <property type="match status" value="1"/>
</dbReference>
<dbReference type="Gene3D" id="3.30.54.20">
    <property type="match status" value="1"/>
</dbReference>
<dbReference type="Gene3D" id="6.10.250.550">
    <property type="match status" value="1"/>
</dbReference>
<dbReference type="Gene3D" id="3.30.930.10">
    <property type="entry name" value="Bira Bifunctional Protein, Domain 2"/>
    <property type="match status" value="1"/>
</dbReference>
<dbReference type="Gene3D" id="3.30.980.10">
    <property type="entry name" value="Threonyl-trna Synthetase, Chain A, domain 2"/>
    <property type="match status" value="1"/>
</dbReference>
<dbReference type="HAMAP" id="MF_00036_B">
    <property type="entry name" value="Ala_tRNA_synth_B"/>
    <property type="match status" value="1"/>
</dbReference>
<dbReference type="InterPro" id="IPR045864">
    <property type="entry name" value="aa-tRNA-synth_II/BPL/LPL"/>
</dbReference>
<dbReference type="InterPro" id="IPR002318">
    <property type="entry name" value="Ala-tRNA-lgiase_IIc"/>
</dbReference>
<dbReference type="InterPro" id="IPR018162">
    <property type="entry name" value="Ala-tRNA-ligase_IIc_anticod-bd"/>
</dbReference>
<dbReference type="InterPro" id="IPR018165">
    <property type="entry name" value="Ala-tRNA-synth_IIc_core"/>
</dbReference>
<dbReference type="InterPro" id="IPR018164">
    <property type="entry name" value="Ala-tRNA-synth_IIc_N"/>
</dbReference>
<dbReference type="InterPro" id="IPR050058">
    <property type="entry name" value="Ala-tRNA_ligase"/>
</dbReference>
<dbReference type="InterPro" id="IPR023033">
    <property type="entry name" value="Ala_tRNA_ligase_euk/bac"/>
</dbReference>
<dbReference type="InterPro" id="IPR003156">
    <property type="entry name" value="DHHA1_dom"/>
</dbReference>
<dbReference type="InterPro" id="IPR018163">
    <property type="entry name" value="Thr/Ala-tRNA-synth_IIc_edit"/>
</dbReference>
<dbReference type="InterPro" id="IPR009000">
    <property type="entry name" value="Transl_B-barrel_sf"/>
</dbReference>
<dbReference type="InterPro" id="IPR012947">
    <property type="entry name" value="tRNA_SAD"/>
</dbReference>
<dbReference type="NCBIfam" id="TIGR00344">
    <property type="entry name" value="alaS"/>
    <property type="match status" value="1"/>
</dbReference>
<dbReference type="PANTHER" id="PTHR11777:SF9">
    <property type="entry name" value="ALANINE--TRNA LIGASE, CYTOPLASMIC"/>
    <property type="match status" value="1"/>
</dbReference>
<dbReference type="PANTHER" id="PTHR11777">
    <property type="entry name" value="ALANYL-TRNA SYNTHETASE"/>
    <property type="match status" value="1"/>
</dbReference>
<dbReference type="Pfam" id="PF02272">
    <property type="entry name" value="DHHA1"/>
    <property type="match status" value="1"/>
</dbReference>
<dbReference type="Pfam" id="PF01411">
    <property type="entry name" value="tRNA-synt_2c"/>
    <property type="match status" value="1"/>
</dbReference>
<dbReference type="Pfam" id="PF07973">
    <property type="entry name" value="tRNA_SAD"/>
    <property type="match status" value="1"/>
</dbReference>
<dbReference type="PRINTS" id="PR00980">
    <property type="entry name" value="TRNASYNTHALA"/>
</dbReference>
<dbReference type="SMART" id="SM00863">
    <property type="entry name" value="tRNA_SAD"/>
    <property type="match status" value="1"/>
</dbReference>
<dbReference type="SUPFAM" id="SSF55681">
    <property type="entry name" value="Class II aaRS and biotin synthetases"/>
    <property type="match status" value="1"/>
</dbReference>
<dbReference type="SUPFAM" id="SSF101353">
    <property type="entry name" value="Putative anticodon-binding domain of alanyl-tRNA synthetase (AlaRS)"/>
    <property type="match status" value="1"/>
</dbReference>
<dbReference type="SUPFAM" id="SSF55186">
    <property type="entry name" value="ThrRS/AlaRS common domain"/>
    <property type="match status" value="1"/>
</dbReference>
<dbReference type="SUPFAM" id="SSF50447">
    <property type="entry name" value="Translation proteins"/>
    <property type="match status" value="1"/>
</dbReference>
<dbReference type="PROSITE" id="PS50860">
    <property type="entry name" value="AA_TRNA_LIGASE_II_ALA"/>
    <property type="match status" value="1"/>
</dbReference>
<keyword id="KW-0030">Aminoacyl-tRNA synthetase</keyword>
<keyword id="KW-0067">ATP-binding</keyword>
<keyword id="KW-0963">Cytoplasm</keyword>
<keyword id="KW-0436">Ligase</keyword>
<keyword id="KW-0479">Metal-binding</keyword>
<keyword id="KW-0547">Nucleotide-binding</keyword>
<keyword id="KW-0648">Protein biosynthesis</keyword>
<keyword id="KW-1185">Reference proteome</keyword>
<keyword id="KW-0694">RNA-binding</keyword>
<keyword id="KW-0820">tRNA-binding</keyword>
<keyword id="KW-0862">Zinc</keyword>
<accession>Q8FT23</accession>
<feature type="chain" id="PRO_0000075098" description="Alanine--tRNA ligase">
    <location>
        <begin position="1"/>
        <end position="890"/>
    </location>
</feature>
<feature type="binding site" evidence="1">
    <location>
        <position position="573"/>
    </location>
    <ligand>
        <name>Zn(2+)</name>
        <dbReference type="ChEBI" id="CHEBI:29105"/>
    </ligand>
</feature>
<feature type="binding site" evidence="1">
    <location>
        <position position="577"/>
    </location>
    <ligand>
        <name>Zn(2+)</name>
        <dbReference type="ChEBI" id="CHEBI:29105"/>
    </ligand>
</feature>
<feature type="binding site" evidence="1">
    <location>
        <position position="676"/>
    </location>
    <ligand>
        <name>Zn(2+)</name>
        <dbReference type="ChEBI" id="CHEBI:29105"/>
    </ligand>
</feature>
<feature type="binding site" evidence="1">
    <location>
        <position position="680"/>
    </location>
    <ligand>
        <name>Zn(2+)</name>
        <dbReference type="ChEBI" id="CHEBI:29105"/>
    </ligand>
</feature>
<comment type="function">
    <text evidence="1">Catalyzes the attachment of alanine to tRNA(Ala) in a two-step reaction: alanine is first activated by ATP to form Ala-AMP and then transferred to the acceptor end of tRNA(Ala). Also edits incorrectly charged Ser-tRNA(Ala) and Gly-tRNA(Ala) via its editing domain.</text>
</comment>
<comment type="catalytic activity">
    <reaction evidence="1">
        <text>tRNA(Ala) + L-alanine + ATP = L-alanyl-tRNA(Ala) + AMP + diphosphate</text>
        <dbReference type="Rhea" id="RHEA:12540"/>
        <dbReference type="Rhea" id="RHEA-COMP:9657"/>
        <dbReference type="Rhea" id="RHEA-COMP:9923"/>
        <dbReference type="ChEBI" id="CHEBI:30616"/>
        <dbReference type="ChEBI" id="CHEBI:33019"/>
        <dbReference type="ChEBI" id="CHEBI:57972"/>
        <dbReference type="ChEBI" id="CHEBI:78442"/>
        <dbReference type="ChEBI" id="CHEBI:78497"/>
        <dbReference type="ChEBI" id="CHEBI:456215"/>
        <dbReference type="EC" id="6.1.1.7"/>
    </reaction>
</comment>
<comment type="cofactor">
    <cofactor evidence="1">
        <name>Zn(2+)</name>
        <dbReference type="ChEBI" id="CHEBI:29105"/>
    </cofactor>
    <text evidence="1">Binds 1 zinc ion per subunit.</text>
</comment>
<comment type="subcellular location">
    <subcellularLocation>
        <location evidence="1">Cytoplasm</location>
    </subcellularLocation>
</comment>
<comment type="domain">
    <text evidence="1">Consists of three domains; the N-terminal catalytic domain, the editing domain and the C-terminal C-Ala domain. The editing domain removes incorrectly charged amino acids, while the C-Ala domain, along with tRNA(Ala), serves as a bridge to cooperatively bring together the editing and aminoacylation centers thus stimulating deacylation of misacylated tRNAs.</text>
</comment>
<comment type="similarity">
    <text evidence="1">Belongs to the class-II aminoacyl-tRNA synthetase family.</text>
</comment>
<comment type="sequence caution" evidence="2">
    <conflict type="erroneous initiation">
        <sequence resource="EMBL-CDS" id="BAC18558"/>
    </conflict>
</comment>
<reference key="1">
    <citation type="journal article" date="2003" name="Genome Res.">
        <title>Comparative complete genome sequence analysis of the amino acid replacements responsible for the thermostability of Corynebacterium efficiens.</title>
        <authorList>
            <person name="Nishio Y."/>
            <person name="Nakamura Y."/>
            <person name="Kawarabayasi Y."/>
            <person name="Usuda Y."/>
            <person name="Kimura E."/>
            <person name="Sugimoto S."/>
            <person name="Matsui K."/>
            <person name="Yamagishi A."/>
            <person name="Kikuchi H."/>
            <person name="Ikeo K."/>
            <person name="Gojobori T."/>
        </authorList>
    </citation>
    <scope>NUCLEOTIDE SEQUENCE [LARGE SCALE GENOMIC DNA]</scope>
    <source>
        <strain>DSM 44549 / YS-314 / AJ 12310 / JCM 11189 / NBRC 100395</strain>
    </source>
</reference>
<protein>
    <recommendedName>
        <fullName evidence="1">Alanine--tRNA ligase</fullName>
        <ecNumber evidence="1">6.1.1.7</ecNumber>
    </recommendedName>
    <alternativeName>
        <fullName evidence="1">Alanyl-tRNA synthetase</fullName>
        <shortName evidence="1">AlaRS</shortName>
    </alternativeName>
</protein>
<organism>
    <name type="scientific">Corynebacterium efficiens (strain DSM 44549 / YS-314 / AJ 12310 / JCM 11189 / NBRC 100395)</name>
    <dbReference type="NCBI Taxonomy" id="196164"/>
    <lineage>
        <taxon>Bacteria</taxon>
        <taxon>Bacillati</taxon>
        <taxon>Actinomycetota</taxon>
        <taxon>Actinomycetes</taxon>
        <taxon>Mycobacteriales</taxon>
        <taxon>Corynebacteriaceae</taxon>
        <taxon>Corynebacterium</taxon>
    </lineage>
</organism>